<dbReference type="EC" id="1.1.1.49" evidence="3"/>
<dbReference type="EMBL" id="X74421">
    <property type="protein sequence ID" value="CAA52442.1"/>
    <property type="molecule type" value="mRNA"/>
</dbReference>
<dbReference type="PIR" id="S60287">
    <property type="entry name" value="S60287"/>
</dbReference>
<dbReference type="SMR" id="P37830"/>
<dbReference type="FunCoup" id="P37830">
    <property type="interactions" value="2230"/>
</dbReference>
<dbReference type="STRING" id="4113.P37830"/>
<dbReference type="PaxDb" id="4113-PGSC0003DMT400052250"/>
<dbReference type="eggNOG" id="KOG0563">
    <property type="taxonomic scope" value="Eukaryota"/>
</dbReference>
<dbReference type="InParanoid" id="P37830"/>
<dbReference type="SABIO-RK" id="P37830"/>
<dbReference type="UniPathway" id="UPA00115">
    <property type="reaction ID" value="UER00408"/>
</dbReference>
<dbReference type="Proteomes" id="UP000011115">
    <property type="component" value="Unassembled WGS sequence"/>
</dbReference>
<dbReference type="ExpressionAtlas" id="P37830">
    <property type="expression patterns" value="baseline"/>
</dbReference>
<dbReference type="GO" id="GO:0005829">
    <property type="term" value="C:cytosol"/>
    <property type="evidence" value="ECO:0000318"/>
    <property type="project" value="GO_Central"/>
</dbReference>
<dbReference type="GO" id="GO:0004345">
    <property type="term" value="F:glucose-6-phosphate dehydrogenase activity"/>
    <property type="evidence" value="ECO:0000318"/>
    <property type="project" value="GO_Central"/>
</dbReference>
<dbReference type="GO" id="GO:0050661">
    <property type="term" value="F:NADP binding"/>
    <property type="evidence" value="ECO:0007669"/>
    <property type="project" value="InterPro"/>
</dbReference>
<dbReference type="GO" id="GO:0006006">
    <property type="term" value="P:glucose metabolic process"/>
    <property type="evidence" value="ECO:0000318"/>
    <property type="project" value="GO_Central"/>
</dbReference>
<dbReference type="GO" id="GO:0009051">
    <property type="term" value="P:pentose-phosphate shunt, oxidative branch"/>
    <property type="evidence" value="ECO:0000318"/>
    <property type="project" value="GO_Central"/>
</dbReference>
<dbReference type="FunFam" id="3.30.360.10:FF:000013">
    <property type="entry name" value="Glucose-6-phosphate 1-dehydrogenase"/>
    <property type="match status" value="1"/>
</dbReference>
<dbReference type="Gene3D" id="3.30.360.10">
    <property type="entry name" value="Dihydrodipicolinate Reductase, domain 2"/>
    <property type="match status" value="1"/>
</dbReference>
<dbReference type="Gene3D" id="3.40.50.720">
    <property type="entry name" value="NAD(P)-binding Rossmann-like Domain"/>
    <property type="match status" value="1"/>
</dbReference>
<dbReference type="HAMAP" id="MF_00966">
    <property type="entry name" value="G6PD"/>
    <property type="match status" value="1"/>
</dbReference>
<dbReference type="InterPro" id="IPR001282">
    <property type="entry name" value="G6P_DH"/>
</dbReference>
<dbReference type="InterPro" id="IPR019796">
    <property type="entry name" value="G6P_DH_AS"/>
</dbReference>
<dbReference type="InterPro" id="IPR022675">
    <property type="entry name" value="G6P_DH_C"/>
</dbReference>
<dbReference type="InterPro" id="IPR022674">
    <property type="entry name" value="G6P_DH_NAD-bd"/>
</dbReference>
<dbReference type="InterPro" id="IPR036291">
    <property type="entry name" value="NAD(P)-bd_dom_sf"/>
</dbReference>
<dbReference type="NCBIfam" id="TIGR00871">
    <property type="entry name" value="zwf"/>
    <property type="match status" value="1"/>
</dbReference>
<dbReference type="PANTHER" id="PTHR23429:SF0">
    <property type="entry name" value="GLUCOSE-6-PHOSPHATE 1-DEHYDROGENASE"/>
    <property type="match status" value="1"/>
</dbReference>
<dbReference type="PANTHER" id="PTHR23429">
    <property type="entry name" value="GLUCOSE-6-PHOSPHATE 1-DEHYDROGENASE G6PD"/>
    <property type="match status" value="1"/>
</dbReference>
<dbReference type="Pfam" id="PF02781">
    <property type="entry name" value="G6PD_C"/>
    <property type="match status" value="1"/>
</dbReference>
<dbReference type="Pfam" id="PF00479">
    <property type="entry name" value="G6PD_N"/>
    <property type="match status" value="1"/>
</dbReference>
<dbReference type="PIRSF" id="PIRSF000110">
    <property type="entry name" value="G6PD"/>
    <property type="match status" value="1"/>
</dbReference>
<dbReference type="PRINTS" id="PR00079">
    <property type="entry name" value="G6PDHDRGNASE"/>
</dbReference>
<dbReference type="SUPFAM" id="SSF55347">
    <property type="entry name" value="Glyceraldehyde-3-phosphate dehydrogenase-like, C-terminal domain"/>
    <property type="match status" value="1"/>
</dbReference>
<dbReference type="SUPFAM" id="SSF51735">
    <property type="entry name" value="NAD(P)-binding Rossmann-fold domains"/>
    <property type="match status" value="1"/>
</dbReference>
<dbReference type="PROSITE" id="PS00069">
    <property type="entry name" value="G6P_DEHYDROGENASE"/>
    <property type="match status" value="1"/>
</dbReference>
<organism>
    <name type="scientific">Solanum tuberosum</name>
    <name type="common">Potato</name>
    <dbReference type="NCBI Taxonomy" id="4113"/>
    <lineage>
        <taxon>Eukaryota</taxon>
        <taxon>Viridiplantae</taxon>
        <taxon>Streptophyta</taxon>
        <taxon>Embryophyta</taxon>
        <taxon>Tracheophyta</taxon>
        <taxon>Spermatophyta</taxon>
        <taxon>Magnoliopsida</taxon>
        <taxon>eudicotyledons</taxon>
        <taxon>Gunneridae</taxon>
        <taxon>Pentapetalae</taxon>
        <taxon>asterids</taxon>
        <taxon>lamiids</taxon>
        <taxon>Solanales</taxon>
        <taxon>Solanaceae</taxon>
        <taxon>Solanoideae</taxon>
        <taxon>Solaneae</taxon>
        <taxon>Solanum</taxon>
    </lineage>
</organism>
<protein>
    <recommendedName>
        <fullName>Glucose-6-phosphate 1-dehydrogenase, cytoplasmic isoform</fullName>
        <shortName>G6PD</shortName>
        <ecNumber evidence="3">1.1.1.49</ecNumber>
    </recommendedName>
</protein>
<proteinExistence type="evidence at protein level"/>
<name>G6PD_SOLTU</name>
<comment type="function">
    <text evidence="3">Catalyzes the rate-limiting step of the oxidative pentose-phosphate pathway, which represents a route for the dissimilation of carbohydrates besides glycolysis. The main function of this enzyme is to generate NADPH for reductive biosyntheses.</text>
</comment>
<comment type="catalytic activity">
    <reaction evidence="3">
        <text>D-glucose 6-phosphate + NADP(+) = 6-phospho-D-glucono-1,5-lactone + NADPH + H(+)</text>
        <dbReference type="Rhea" id="RHEA:15841"/>
        <dbReference type="ChEBI" id="CHEBI:15378"/>
        <dbReference type="ChEBI" id="CHEBI:57783"/>
        <dbReference type="ChEBI" id="CHEBI:57955"/>
        <dbReference type="ChEBI" id="CHEBI:58349"/>
        <dbReference type="ChEBI" id="CHEBI:61548"/>
        <dbReference type="EC" id="1.1.1.49"/>
    </reaction>
</comment>
<comment type="activity regulation">
    <text evidence="3">Regulated by metabolites.</text>
</comment>
<comment type="pathway">
    <text evidence="3">Carbohydrate degradation; pentose phosphate pathway; D-ribulose 5-phosphate from D-glucose 6-phosphate (oxidative stage): step 1/3.</text>
</comment>
<comment type="subunit">
    <text evidence="2">Homotetramer.</text>
</comment>
<comment type="subcellular location">
    <subcellularLocation>
        <location evidence="2">Cytoplasm</location>
    </subcellularLocation>
</comment>
<comment type="tissue specificity">
    <text>Found in tubers, stolons, roots, and flower buds.</text>
</comment>
<comment type="similarity">
    <text evidence="4">Belongs to the glucose-6-phosphate dehydrogenase family.</text>
</comment>
<accession>P37830</accession>
<feature type="chain" id="PRO_0000068101" description="Glucose-6-phosphate 1-dehydrogenase, cytoplasmic isoform">
    <location>
        <begin position="1"/>
        <end position="511"/>
    </location>
</feature>
<feature type="active site" description="Proton acceptor" evidence="1">
    <location>
        <position position="270"/>
    </location>
</feature>
<feature type="binding site" evidence="2">
    <location>
        <begin position="36"/>
        <end position="43"/>
    </location>
    <ligand>
        <name>NADP(+)</name>
        <dbReference type="ChEBI" id="CHEBI:58349"/>
        <label>1</label>
    </ligand>
</feature>
<feature type="binding site" evidence="2">
    <location>
        <position position="71"/>
    </location>
    <ligand>
        <name>NADP(+)</name>
        <dbReference type="ChEBI" id="CHEBI:58349"/>
        <label>1</label>
    </ligand>
</feature>
<feature type="binding site" evidence="2">
    <location>
        <position position="151"/>
    </location>
    <ligand>
        <name>NADP(+)</name>
        <dbReference type="ChEBI" id="CHEBI:58349"/>
        <label>1</label>
    </ligand>
</feature>
<feature type="binding site" evidence="2">
    <location>
        <position position="178"/>
    </location>
    <ligand>
        <name>D-glucose 6-phosphate</name>
        <dbReference type="ChEBI" id="CHEBI:61548"/>
    </ligand>
</feature>
<feature type="binding site" evidence="2">
    <location>
        <position position="178"/>
    </location>
    <ligand>
        <name>NADP(+)</name>
        <dbReference type="ChEBI" id="CHEBI:58349"/>
        <label>1</label>
    </ligand>
</feature>
<feature type="binding site" evidence="2">
    <location>
        <begin position="208"/>
        <end position="212"/>
    </location>
    <ligand>
        <name>D-glucose 6-phosphate</name>
        <dbReference type="ChEBI" id="CHEBI:61548"/>
    </ligand>
</feature>
<feature type="binding site" evidence="2">
    <location>
        <position position="246"/>
    </location>
    <ligand>
        <name>D-glucose 6-phosphate</name>
        <dbReference type="ChEBI" id="CHEBI:61548"/>
    </ligand>
</feature>
<feature type="binding site" evidence="2">
    <location>
        <position position="265"/>
    </location>
    <ligand>
        <name>D-glucose 6-phosphate</name>
        <dbReference type="ChEBI" id="CHEBI:61548"/>
    </ligand>
</feature>
<feature type="binding site" evidence="2">
    <location>
        <position position="353"/>
    </location>
    <ligand>
        <name>NADP(+)</name>
        <dbReference type="ChEBI" id="CHEBI:58349"/>
        <label>2</label>
    </ligand>
</feature>
<feature type="binding site" evidence="2">
    <location>
        <position position="356"/>
    </location>
    <ligand>
        <name>D-glucose 6-phosphate</name>
        <dbReference type="ChEBI" id="CHEBI:61548"/>
    </ligand>
</feature>
<feature type="binding site" evidence="2">
    <location>
        <position position="361"/>
    </location>
    <ligand>
        <name>D-glucose 6-phosphate</name>
        <dbReference type="ChEBI" id="CHEBI:61548"/>
    </ligand>
</feature>
<feature type="binding site" evidence="2">
    <location>
        <position position="362"/>
    </location>
    <ligand>
        <name>NADP(+)</name>
        <dbReference type="ChEBI" id="CHEBI:58349"/>
        <label>2</label>
    </ligand>
</feature>
<feature type="binding site" evidence="2">
    <location>
        <position position="366"/>
    </location>
    <ligand>
        <name>NADP(+)</name>
        <dbReference type="ChEBI" id="CHEBI:58349"/>
        <label>2</label>
    </ligand>
</feature>
<feature type="binding site" evidence="2">
    <location>
        <position position="390"/>
    </location>
    <ligand>
        <name>NADP(+)</name>
        <dbReference type="ChEBI" id="CHEBI:58349"/>
        <label>2</label>
    </ligand>
</feature>
<feature type="binding site" evidence="2">
    <location>
        <position position="392"/>
    </location>
    <ligand>
        <name>D-glucose 6-phosphate</name>
        <dbReference type="ChEBI" id="CHEBI:61548"/>
    </ligand>
</feature>
<feature type="binding site" evidence="2">
    <location>
        <begin position="398"/>
        <end position="400"/>
    </location>
    <ligand>
        <name>NADP(+)</name>
        <dbReference type="ChEBI" id="CHEBI:58349"/>
        <label>2</label>
    </ligand>
</feature>
<feature type="binding site" evidence="2">
    <location>
        <begin position="418"/>
        <end position="420"/>
    </location>
    <ligand>
        <name>NADP(+)</name>
        <dbReference type="ChEBI" id="CHEBI:58349"/>
        <label>2</label>
    </ligand>
</feature>
<feature type="binding site" evidence="2">
    <location>
        <position position="484"/>
    </location>
    <ligand>
        <name>NADP(+)</name>
        <dbReference type="ChEBI" id="CHEBI:58349"/>
        <label>2</label>
    </ligand>
</feature>
<feature type="binding site" evidence="2">
    <location>
        <position position="506"/>
    </location>
    <ligand>
        <name>NADP(+)</name>
        <dbReference type="ChEBI" id="CHEBI:58349"/>
        <label>2</label>
    </ligand>
</feature>
<evidence type="ECO:0000250" key="1">
    <source>
        <dbReference type="UniProtKB" id="P11411"/>
    </source>
</evidence>
<evidence type="ECO:0000250" key="2">
    <source>
        <dbReference type="UniProtKB" id="P11413"/>
    </source>
</evidence>
<evidence type="ECO:0000269" key="3">
    <source>
    </source>
</evidence>
<evidence type="ECO:0000305" key="4"/>
<gene>
    <name type="primary">G6PDH</name>
</gene>
<reference key="1">
    <citation type="journal article" date="1994" name="Plant J.">
        <title>Purification, characterization, and cDNA sequence of glucose-6-phosphate dehydrogenase from potato (Solanum tuberosum L.).</title>
        <authorList>
            <person name="Graeve K."/>
            <person name="von Schaewen A."/>
            <person name="Scheibe R."/>
        </authorList>
    </citation>
    <scope>NUCLEOTIDE SEQUENCE [MRNA]</scope>
    <scope>FUNCTION</scope>
    <scope>CATALYTIC ACTIVITY</scope>
    <scope>ACTIVITY REGULATION</scope>
    <scope>PATHWAY</scope>
    <source>
        <strain>cv. Desiree</strain>
        <tissue>Green leaf</tissue>
    </source>
</reference>
<keyword id="KW-0119">Carbohydrate metabolism</keyword>
<keyword id="KW-0963">Cytoplasm</keyword>
<keyword id="KW-0313">Glucose metabolism</keyword>
<keyword id="KW-0521">NADP</keyword>
<keyword id="KW-0560">Oxidoreductase</keyword>
<keyword id="KW-1185">Reference proteome</keyword>
<sequence length="511" mass="58471">MAASWCIEKRGSIRNDSFRDNDNIPETGCLSIIVLGASGDLAKKKTFPALFNLYRQGFLQSNEVHIFGYARTKISDDDLRSRIRGYLSQGKENEGEVSEFLQLIKYVSGSYDSAEGFTSLDKAISEHEFSKNSTEGSSRRLFYFALPPSVYPSVCRMIKSYCMNKSDLGGWTRTVVEKPFGKDLASSEQLSSQIGELFDEPQIYRIDHYLGKELVQNLLVLRFANRFFLPLWNRDNIDNIQIVFREDFGTEGRGGYFDEYGIIRDIIQNHLLQVLCLVAMEKPVSQKPEHIRDEKVKVLQSMLPIEDEEVVLGQYEGYKDDPTVPNNSNTPTFATMVLRIHNERWEGVPFIMKAGKALNSRKAEIRVQFKDVPGDIFRCQKQGRNEFVIRLQPSEAMYMKLTVKKPGLEMSTVQSELDLSYGQRYQGVVIPEAYERLILDTIRGDQQHFVRRDELKAAWEIFTPLLHRIDNGEVKPIPYKPGSRGPAEADELLQNAGYVQTHGYIWIPPTL</sequence>